<protein>
    <recommendedName>
        <fullName>Uncharacterized protein 108L</fullName>
    </recommendedName>
</protein>
<dbReference type="EMBL" id="DQ643392">
    <property type="protein sequence ID" value="ABF82138.1"/>
    <property type="molecule type" value="Genomic_DNA"/>
</dbReference>
<dbReference type="RefSeq" id="YP_654680.1">
    <property type="nucleotide sequence ID" value="NC_008187.1"/>
</dbReference>
<dbReference type="KEGG" id="vg:4156319"/>
<dbReference type="OrthoDB" id="4131at10239"/>
<dbReference type="Proteomes" id="UP000001358">
    <property type="component" value="Genome"/>
</dbReference>
<dbReference type="CDD" id="cd18785">
    <property type="entry name" value="SF2_C"/>
    <property type="match status" value="1"/>
</dbReference>
<dbReference type="Gene3D" id="3.40.50.300">
    <property type="entry name" value="P-loop containing nucleotide triphosphate hydrolases"/>
    <property type="match status" value="1"/>
</dbReference>
<dbReference type="InterPro" id="IPR027417">
    <property type="entry name" value="P-loop_NTPase"/>
</dbReference>
<dbReference type="SUPFAM" id="SSF52540">
    <property type="entry name" value="P-loop containing nucleoside triphosphate hydrolases"/>
    <property type="match status" value="1"/>
</dbReference>
<sequence length="104" mass="12083">MGERTTSLLGKQQTYDPEARILIGTNSKIGTGFDHPKLDTLLAAADMVSYYIQFIGRIMRRKDVEPIIFDLVDSHPILRQHWIKRKKVYENHGGEIIKYNPRQE</sequence>
<feature type="chain" id="PRO_0000377812" description="Uncharacterized protein 108L">
    <location>
        <begin position="1"/>
        <end position="104"/>
    </location>
</feature>
<organism>
    <name type="scientific">Invertebrate iridescent virus 3</name>
    <name type="common">IIV-3</name>
    <name type="synonym">Mosquito iridescent virus</name>
    <dbReference type="NCBI Taxonomy" id="345201"/>
    <lineage>
        <taxon>Viruses</taxon>
        <taxon>Varidnaviria</taxon>
        <taxon>Bamfordvirae</taxon>
        <taxon>Nucleocytoviricota</taxon>
        <taxon>Megaviricetes</taxon>
        <taxon>Pimascovirales</taxon>
        <taxon>Iridoviridae</taxon>
        <taxon>Betairidovirinae</taxon>
        <taxon>Chloriridovirus</taxon>
    </lineage>
</organism>
<proteinExistence type="predicted"/>
<name>108L_IIV3</name>
<accession>Q196V2</accession>
<reference key="1">
    <citation type="journal article" date="2006" name="J. Virol.">
        <title>Genome of invertebrate iridescent virus type 3 (mosquito iridescent virus).</title>
        <authorList>
            <person name="Delhon G."/>
            <person name="Tulman E.R."/>
            <person name="Afonso C.L."/>
            <person name="Lu Z."/>
            <person name="Becnel J.J."/>
            <person name="Moser B.A."/>
            <person name="Kutish G.F."/>
            <person name="Rock D.L."/>
        </authorList>
    </citation>
    <scope>NUCLEOTIDE SEQUENCE [LARGE SCALE GENOMIC DNA]</scope>
</reference>
<gene>
    <name type="ORF">IIV3-108L</name>
</gene>
<keyword id="KW-1185">Reference proteome</keyword>
<organismHost>
    <name type="scientific">Aedes vexans</name>
    <name type="common">Inland floodwater mosquito</name>
    <name type="synonym">Culex vexans</name>
    <dbReference type="NCBI Taxonomy" id="7163"/>
</organismHost>
<organismHost>
    <name type="scientific">Culex territans</name>
    <dbReference type="NCBI Taxonomy" id="42431"/>
</organismHost>
<organismHost>
    <name type="scientific">Culiseta annulata</name>
    <dbReference type="NCBI Taxonomy" id="332058"/>
</organismHost>
<organismHost>
    <name type="scientific">Ochlerotatus sollicitans</name>
    <name type="common">eastern saltmarsh mosquito</name>
    <dbReference type="NCBI Taxonomy" id="310513"/>
</organismHost>
<organismHost>
    <name type="scientific">Ochlerotatus taeniorhynchus</name>
    <name type="common">Black salt marsh mosquito</name>
    <name type="synonym">Aedes taeniorhynchus</name>
    <dbReference type="NCBI Taxonomy" id="329105"/>
</organismHost>
<organismHost>
    <name type="scientific">Psorophora ferox</name>
    <dbReference type="NCBI Taxonomy" id="7183"/>
</organismHost>